<protein>
    <recommendedName>
        <fullName>Zinc finger protein 138</fullName>
    </recommendedName>
</protein>
<sequence>MKRHEMVVAKHSALCSRFAQDLWLEQNIKDSFQKVTLSRYGKYGHKNLQLRKGCKSVDECKGHQGGFNGLNQCLKITTSKIFQCNKYVKVMHKFSNSNRHKIRHTENKHFRCKECDKSLCMLSRLTQHKKIHTRENFYKCEECGKTFNWSTNLSKPKKIHTGEKPYKCEVCGKAFHQSSILTKHKIIRTGEKPYKCAHCGKAFKQSSHLTRHKIIHTEEKPYKCEQCGKVFKQSPTLTKHQIIYTGEEPYKCEECGKAFNLS</sequence>
<dbReference type="EMBL" id="AK055644">
    <property type="status" value="NOT_ANNOTATED_CDS"/>
    <property type="molecule type" value="mRNA"/>
</dbReference>
<dbReference type="EMBL" id="AK294302">
    <property type="protein sequence ID" value="BAG57583.1"/>
    <property type="molecule type" value="mRNA"/>
</dbReference>
<dbReference type="EMBL" id="AK298230">
    <property type="protein sequence ID" value="BAG60499.1"/>
    <property type="molecule type" value="mRNA"/>
</dbReference>
<dbReference type="EMBL" id="AC073349">
    <property type="status" value="NOT_ANNOTATED_CDS"/>
    <property type="molecule type" value="Genomic_DNA"/>
</dbReference>
<dbReference type="EMBL" id="U09847">
    <property type="protein sequence ID" value="AAC50263.1"/>
    <property type="molecule type" value="mRNA"/>
</dbReference>
<dbReference type="CCDS" id="CCDS34645.2">
    <molecule id="P52744-2"/>
</dbReference>
<dbReference type="CCDS" id="CCDS55115.1">
    <molecule id="P52744-3"/>
</dbReference>
<dbReference type="PIR" id="I38615">
    <property type="entry name" value="I38615"/>
</dbReference>
<dbReference type="RefSeq" id="NP_001153655.1">
    <property type="nucleotide sequence ID" value="NM_001160183.2"/>
</dbReference>
<dbReference type="RefSeq" id="NP_001258566.1">
    <property type="nucleotide sequence ID" value="NM_001271637.1"/>
</dbReference>
<dbReference type="RefSeq" id="NP_001354501.1">
    <molecule id="P52744-1"/>
    <property type="nucleotide sequence ID" value="NM_001367572.1"/>
</dbReference>
<dbReference type="RefSeq" id="NP_006515.3">
    <molecule id="P52744-2"/>
    <property type="nucleotide sequence ID" value="NM_006524.4"/>
</dbReference>
<dbReference type="SMR" id="P52744"/>
<dbReference type="BioGRID" id="113492">
    <property type="interactions" value="19"/>
</dbReference>
<dbReference type="FunCoup" id="P52744">
    <property type="interactions" value="44"/>
</dbReference>
<dbReference type="IntAct" id="P52744">
    <property type="interactions" value="24"/>
</dbReference>
<dbReference type="iPTMnet" id="P52744"/>
<dbReference type="PhosphoSitePlus" id="P52744"/>
<dbReference type="BioMuta" id="ZNF138"/>
<dbReference type="DMDM" id="152031767"/>
<dbReference type="jPOST" id="P52744"/>
<dbReference type="MassIVE" id="P52744"/>
<dbReference type="PaxDb" id="9606-ENSP00000303533"/>
<dbReference type="PeptideAtlas" id="P52744"/>
<dbReference type="ProteomicsDB" id="20546"/>
<dbReference type="ProteomicsDB" id="20561"/>
<dbReference type="ProteomicsDB" id="56520">
    <molecule id="P52744-1"/>
</dbReference>
<dbReference type="Antibodypedia" id="28126">
    <property type="antibodies" value="83 antibodies from 17 providers"/>
</dbReference>
<dbReference type="DNASU" id="7697"/>
<dbReference type="Ensembl" id="ENST00000440155.6">
    <molecule id="P52744-2"/>
    <property type="protein sequence ID" value="ENSP00000407262.2"/>
    <property type="gene ID" value="ENSG00000197008.10"/>
</dbReference>
<dbReference type="GeneID" id="7697"/>
<dbReference type="KEGG" id="hsa:7697"/>
<dbReference type="UCSC" id="uc011kdq.4">
    <molecule id="P52744-1"/>
    <property type="organism name" value="human"/>
</dbReference>
<dbReference type="AGR" id="HGNC:12922"/>
<dbReference type="CTD" id="7697"/>
<dbReference type="DisGeNET" id="7697"/>
<dbReference type="GeneCards" id="ZNF138"/>
<dbReference type="HGNC" id="HGNC:12922">
    <property type="gene designation" value="ZNF138"/>
</dbReference>
<dbReference type="HPA" id="ENSG00000197008">
    <property type="expression patterns" value="Low tissue specificity"/>
</dbReference>
<dbReference type="MIM" id="604080">
    <property type="type" value="gene"/>
</dbReference>
<dbReference type="neXtProt" id="NX_P52744"/>
<dbReference type="OpenTargets" id="ENSG00000197008"/>
<dbReference type="PharmGKB" id="PA37510"/>
<dbReference type="VEuPathDB" id="HostDB:ENSG00000197008"/>
<dbReference type="eggNOG" id="KOG1721">
    <property type="taxonomic scope" value="Eukaryota"/>
</dbReference>
<dbReference type="GeneTree" id="ENSGT00940000162960"/>
<dbReference type="InParanoid" id="P52744"/>
<dbReference type="OrthoDB" id="9536971at2759"/>
<dbReference type="PAN-GO" id="P52744">
    <property type="GO annotations" value="3 GO annotations based on evolutionary models"/>
</dbReference>
<dbReference type="PhylomeDB" id="P52744"/>
<dbReference type="TreeFam" id="TF342117"/>
<dbReference type="PathwayCommons" id="P52744"/>
<dbReference type="Reactome" id="R-HSA-212436">
    <property type="pathway name" value="Generic Transcription Pathway"/>
</dbReference>
<dbReference type="SignaLink" id="P52744"/>
<dbReference type="BioGRID-ORCS" id="7697">
    <property type="hits" value="17 hits in 1107 CRISPR screens"/>
</dbReference>
<dbReference type="ChiTaRS" id="ZNF138">
    <property type="organism name" value="human"/>
</dbReference>
<dbReference type="GenomeRNAi" id="7697"/>
<dbReference type="Pharos" id="P52744">
    <property type="development level" value="Tdark"/>
</dbReference>
<dbReference type="PRO" id="PR:P52744"/>
<dbReference type="Proteomes" id="UP000005640">
    <property type="component" value="Chromosome 7"/>
</dbReference>
<dbReference type="RNAct" id="P52744">
    <property type="molecule type" value="protein"/>
</dbReference>
<dbReference type="Bgee" id="ENSG00000197008">
    <property type="expression patterns" value="Expressed in ganglionic eminence and 173 other cell types or tissues"/>
</dbReference>
<dbReference type="ExpressionAtlas" id="P52744">
    <property type="expression patterns" value="baseline and differential"/>
</dbReference>
<dbReference type="GO" id="GO:0005634">
    <property type="term" value="C:nucleus"/>
    <property type="evidence" value="ECO:0007669"/>
    <property type="project" value="UniProtKB-SubCell"/>
</dbReference>
<dbReference type="GO" id="GO:0000981">
    <property type="term" value="F:DNA-binding transcription factor activity, RNA polymerase II-specific"/>
    <property type="evidence" value="ECO:0000318"/>
    <property type="project" value="GO_Central"/>
</dbReference>
<dbReference type="GO" id="GO:0000978">
    <property type="term" value="F:RNA polymerase II cis-regulatory region sequence-specific DNA binding"/>
    <property type="evidence" value="ECO:0000318"/>
    <property type="project" value="GO_Central"/>
</dbReference>
<dbReference type="GO" id="GO:0008270">
    <property type="term" value="F:zinc ion binding"/>
    <property type="evidence" value="ECO:0007669"/>
    <property type="project" value="UniProtKB-KW"/>
</dbReference>
<dbReference type="GO" id="GO:0006355">
    <property type="term" value="P:regulation of DNA-templated transcription"/>
    <property type="evidence" value="ECO:0000318"/>
    <property type="project" value="GO_Central"/>
</dbReference>
<dbReference type="FunFam" id="3.30.160.60:FF:002472">
    <property type="match status" value="1"/>
</dbReference>
<dbReference type="FunFam" id="3.30.160.60:FF:001181">
    <property type="entry name" value="Zinc finger protein 311"/>
    <property type="match status" value="1"/>
</dbReference>
<dbReference type="FunFam" id="3.30.160.60:FF:000016">
    <property type="entry name" value="zinc finger protein 37 homolog"/>
    <property type="match status" value="1"/>
</dbReference>
<dbReference type="FunFam" id="3.30.160.60:FF:000307">
    <property type="entry name" value="Zinc finger protein ZFP69 isoform 1"/>
    <property type="match status" value="1"/>
</dbReference>
<dbReference type="Gene3D" id="3.30.160.60">
    <property type="entry name" value="Classic Zinc Finger"/>
    <property type="match status" value="6"/>
</dbReference>
<dbReference type="InterPro" id="IPR036236">
    <property type="entry name" value="Znf_C2H2_sf"/>
</dbReference>
<dbReference type="InterPro" id="IPR013087">
    <property type="entry name" value="Znf_C2H2_type"/>
</dbReference>
<dbReference type="PANTHER" id="PTHR24390">
    <property type="entry name" value="ZINC FINGER PROTEIN"/>
    <property type="match status" value="1"/>
</dbReference>
<dbReference type="PANTHER" id="PTHR24390:SF265">
    <property type="entry name" value="ZINC FINGER PROTEIN 239-LIKE-RELATED"/>
    <property type="match status" value="1"/>
</dbReference>
<dbReference type="Pfam" id="PF00096">
    <property type="entry name" value="zf-C2H2"/>
    <property type="match status" value="3"/>
</dbReference>
<dbReference type="Pfam" id="PF13912">
    <property type="entry name" value="zf-C2H2_6"/>
    <property type="match status" value="1"/>
</dbReference>
<dbReference type="SMART" id="SM00355">
    <property type="entry name" value="ZnF_C2H2"/>
    <property type="match status" value="5"/>
</dbReference>
<dbReference type="SUPFAM" id="SSF57667">
    <property type="entry name" value="beta-beta-alpha zinc fingers"/>
    <property type="match status" value="3"/>
</dbReference>
<dbReference type="PROSITE" id="PS00028">
    <property type="entry name" value="ZINC_FINGER_C2H2_1"/>
    <property type="match status" value="2"/>
</dbReference>
<dbReference type="PROSITE" id="PS50157">
    <property type="entry name" value="ZINC_FINGER_C2H2_2"/>
    <property type="match status" value="5"/>
</dbReference>
<name>ZN138_HUMAN</name>
<gene>
    <name type="primary">ZNF138</name>
</gene>
<proteinExistence type="evidence at protein level"/>
<accession>P52744</accession>
<accession>B4DFX2</accession>
<accession>B4DP87</accession>
<accession>E9PHI7</accession>
<accession>E9PHK7</accession>
<comment type="function">
    <text>May be involved in transcriptional regulation as a repressor.</text>
</comment>
<comment type="interaction">
    <interactant intactId="EBI-10746567">
        <id>P52744</id>
    </interactant>
    <interactant intactId="EBI-711154">
        <id>Q9P287</id>
        <label>BCCIP</label>
    </interactant>
    <organismsDiffer>false</organismsDiffer>
    <experiments>3</experiments>
</comment>
<comment type="interaction">
    <interactant intactId="EBI-10746567">
        <id>P52744</id>
    </interactant>
    <interactant intactId="EBI-741925">
        <id>P49366</id>
        <label>DHPS</label>
    </interactant>
    <organismsDiffer>false</organismsDiffer>
    <experiments>3</experiments>
</comment>
<comment type="interaction">
    <interactant intactId="EBI-10746567">
        <id>P52744</id>
    </interactant>
    <interactant intactId="EBI-741705">
        <id>Q8IYF1</id>
        <label>ELOA2</label>
    </interactant>
    <organismsDiffer>false</organismsDiffer>
    <experiments>3</experiments>
</comment>
<comment type="interaction">
    <interactant intactId="EBI-10746567">
        <id>P52744</id>
    </interactant>
    <interactant intactId="EBI-747754">
        <id>P28799</id>
        <label>GRN</label>
    </interactant>
    <organismsDiffer>false</organismsDiffer>
    <experiments>3</experiments>
</comment>
<comment type="interaction">
    <interactant intactId="EBI-10746567">
        <id>P52744</id>
    </interactant>
    <interactant intactId="EBI-466029">
        <id>P42858</id>
        <label>HTT</label>
    </interactant>
    <organismsDiffer>false</organismsDiffer>
    <experiments>9</experiments>
</comment>
<comment type="interaction">
    <interactant intactId="EBI-10746567">
        <id>P52744</id>
    </interactant>
    <interactant intactId="EBI-12012928">
        <id>P60371</id>
        <label>KRTAP10-6</label>
    </interactant>
    <organismsDiffer>false</organismsDiffer>
    <experiments>3</experiments>
</comment>
<comment type="interaction">
    <interactant intactId="EBI-10746567">
        <id>P52744</id>
    </interactant>
    <interactant intactId="EBI-10172290">
        <id>P60409</id>
        <label>KRTAP10-7</label>
    </interactant>
    <organismsDiffer>false</organismsDiffer>
    <experiments>3</experiments>
</comment>
<comment type="interaction">
    <interactant intactId="EBI-10746567">
        <id>P52744</id>
    </interactant>
    <interactant intactId="EBI-10171774">
        <id>P60410</id>
        <label>KRTAP10-8</label>
    </interactant>
    <organismsDiffer>false</organismsDiffer>
    <experiments>3</experiments>
</comment>
<comment type="interaction">
    <interactant intactId="EBI-10746567">
        <id>P52744</id>
    </interactant>
    <interactant intactId="EBI-11953334">
        <id>P60328</id>
        <label>KRTAP12-3</label>
    </interactant>
    <organismsDiffer>false</organismsDiffer>
    <experiments>3</experiments>
</comment>
<comment type="interaction">
    <interactant intactId="EBI-10746567">
        <id>P52744</id>
    </interactant>
    <interactant intactId="EBI-10258746">
        <id>Q9UPM6</id>
        <label>LHX6</label>
    </interactant>
    <organismsDiffer>false</organismsDiffer>
    <experiments>3</experiments>
</comment>
<comment type="interaction">
    <interactant intactId="EBI-10746567">
        <id>P52744</id>
    </interactant>
    <interactant intactId="EBI-713568">
        <id>P45984</id>
        <label>MAPK9</label>
    </interactant>
    <organismsDiffer>false</organismsDiffer>
    <experiments>3</experiments>
</comment>
<comment type="interaction">
    <interactant intactId="EBI-10746567">
        <id>P52744</id>
    </interactant>
    <interactant intactId="EBI-724076">
        <id>Q99750</id>
        <label>MDFI</label>
    </interactant>
    <organismsDiffer>false</organismsDiffer>
    <experiments>3</experiments>
</comment>
<comment type="interaction">
    <interactant intactId="EBI-10746567">
        <id>P52744</id>
    </interactant>
    <interactant intactId="EBI-1802965">
        <id>Q96EB6</id>
        <label>SIRT1</label>
    </interactant>
    <organismsDiffer>false</organismsDiffer>
    <experiments>2</experiments>
</comment>
<comment type="interaction">
    <interactant intactId="EBI-10746567">
        <id>P52744</id>
    </interactant>
    <interactant intactId="EBI-5235340">
        <id>Q7Z699</id>
        <label>SPRED1</label>
    </interactant>
    <organismsDiffer>false</organismsDiffer>
    <experiments>3</experiments>
</comment>
<comment type="interaction">
    <interactant intactId="EBI-10746567">
        <id>P52744</id>
    </interactant>
    <interactant intactId="EBI-725997">
        <id>Q8WV44</id>
        <label>TRIM41</label>
    </interactant>
    <organismsDiffer>false</organismsDiffer>
    <experiments>3</experiments>
</comment>
<comment type="interaction">
    <interactant intactId="EBI-10746567">
        <id>P52744</id>
    </interactant>
    <interactant intactId="EBI-720609">
        <id>O76024</id>
        <label>WFS1</label>
    </interactant>
    <organismsDiffer>false</organismsDiffer>
    <experiments>3</experiments>
</comment>
<comment type="interaction">
    <interactant intactId="EBI-10746567">
        <id>P52744</id>
    </interactant>
    <interactant intactId="EBI-742740">
        <id>Q96BR9</id>
        <label>ZBTB8A</label>
    </interactant>
    <organismsDiffer>false</organismsDiffer>
    <experiments>3</experiments>
</comment>
<comment type="interaction">
    <interactant intactId="EBI-10213071">
        <id>P52744-2</id>
    </interactant>
    <interactant intactId="EBI-741925">
        <id>P49366</id>
        <label>DHPS</label>
    </interactant>
    <organismsDiffer>false</organismsDiffer>
    <experiments>3</experiments>
</comment>
<comment type="interaction">
    <interactant intactId="EBI-10213071">
        <id>P52744-2</id>
    </interactant>
    <interactant intactId="EBI-10171697">
        <id>Q6A162</id>
        <label>KRT40</label>
    </interactant>
    <organismsDiffer>false</organismsDiffer>
    <experiments>3</experiments>
</comment>
<comment type="interaction">
    <interactant intactId="EBI-10213071">
        <id>P52744-2</id>
    </interactant>
    <interactant intactId="EBI-10171774">
        <id>P60410</id>
        <label>KRTAP10-8</label>
    </interactant>
    <organismsDiffer>false</organismsDiffer>
    <experiments>3</experiments>
</comment>
<comment type="interaction">
    <interactant intactId="EBI-10213071">
        <id>P52744-2</id>
    </interactant>
    <interactant intactId="EBI-724076">
        <id>Q99750</id>
        <label>MDFI</label>
    </interactant>
    <organismsDiffer>false</organismsDiffer>
    <experiments>3</experiments>
</comment>
<comment type="interaction">
    <interactant intactId="EBI-10213071">
        <id>P52744-2</id>
    </interactant>
    <interactant intactId="EBI-725997">
        <id>Q8WV44</id>
        <label>TRIM41</label>
    </interactant>
    <organismsDiffer>false</organismsDiffer>
    <experiments>3</experiments>
</comment>
<comment type="interaction">
    <interactant intactId="EBI-10213071">
        <id>P52744-2</id>
    </interactant>
    <interactant intactId="EBI-742740">
        <id>Q96BR9</id>
        <label>ZBTB8A</label>
    </interactant>
    <organismsDiffer>false</organismsDiffer>
    <experiments>3</experiments>
</comment>
<comment type="subcellular location">
    <subcellularLocation>
        <location evidence="5">Nucleus</location>
    </subcellularLocation>
</comment>
<comment type="alternative products">
    <event type="alternative splicing"/>
    <isoform>
        <id>P52744-1</id>
        <name>1</name>
        <sequence type="displayed"/>
    </isoform>
    <isoform>
        <id>P52744-2</id>
        <name>2</name>
        <sequence type="described" ref="VSP_044921"/>
    </isoform>
    <isoform>
        <id>P52744-3</id>
        <name>3</name>
        <sequence type="described" ref="VSP_044921 VSP_047446 VSP_047447"/>
    </isoform>
</comment>
<comment type="similarity">
    <text evidence="5">Belongs to the krueppel C2H2-type zinc-finger protein family.</text>
</comment>
<evidence type="ECO:0000255" key="1">
    <source>
        <dbReference type="PROSITE-ProRule" id="PRU00042"/>
    </source>
</evidence>
<evidence type="ECO:0000269" key="2">
    <source>
    </source>
</evidence>
<evidence type="ECO:0000269" key="3">
    <source>
    </source>
</evidence>
<evidence type="ECO:0000303" key="4">
    <source>
    </source>
</evidence>
<evidence type="ECO:0000305" key="5"/>
<organism>
    <name type="scientific">Homo sapiens</name>
    <name type="common">Human</name>
    <dbReference type="NCBI Taxonomy" id="9606"/>
    <lineage>
        <taxon>Eukaryota</taxon>
        <taxon>Metazoa</taxon>
        <taxon>Chordata</taxon>
        <taxon>Craniata</taxon>
        <taxon>Vertebrata</taxon>
        <taxon>Euteleostomi</taxon>
        <taxon>Mammalia</taxon>
        <taxon>Eutheria</taxon>
        <taxon>Euarchontoglires</taxon>
        <taxon>Primates</taxon>
        <taxon>Haplorrhini</taxon>
        <taxon>Catarrhini</taxon>
        <taxon>Hominidae</taxon>
        <taxon>Homo</taxon>
    </lineage>
</organism>
<feature type="chain" id="PRO_0000047422" description="Zinc finger protein 138">
    <location>
        <begin position="1"/>
        <end position="262"/>
    </location>
</feature>
<feature type="zinc finger region" description="C2H2-type 1" evidence="1">
    <location>
        <begin position="110"/>
        <end position="132"/>
    </location>
</feature>
<feature type="zinc finger region" description="C2H2-type 2; degenerate" evidence="1">
    <location>
        <begin position="138"/>
        <end position="160"/>
    </location>
</feature>
<feature type="zinc finger region" description="C2H2-type 3; degenerate" evidence="1">
    <location>
        <begin position="166"/>
        <end position="188"/>
    </location>
</feature>
<feature type="zinc finger region" description="C2H2-type 4" evidence="1">
    <location>
        <begin position="194"/>
        <end position="216"/>
    </location>
</feature>
<feature type="zinc finger region" description="C2H2-type 5; degenerate" evidence="1">
    <location>
        <begin position="222"/>
        <end position="244"/>
    </location>
</feature>
<feature type="zinc finger region" description="C2H2-type 6; degenerate" evidence="1">
    <location>
        <begin position="250"/>
        <end position="262"/>
    </location>
</feature>
<feature type="splice variant" id="VSP_044921" description="In isoform 2 and isoform 3." evidence="4">
    <original>MKRHEMVVAKHS</original>
    <variation>MGPLTFMDVAIEFSLEEWQCLDTAQRNVYRHVMLENYRNLVFL</variation>
    <location>
        <begin position="1"/>
        <end position="12"/>
    </location>
</feature>
<feature type="splice variant" id="VSP_047446" description="In isoform 3." evidence="4">
    <original>ALCSRFAQDLWLEQNIKDSFQKVTLSRYGKYGHKNLQLRKGCKSVDECKGHQGGFNGLNQCLKITTSKIFQCNKYVKVMHKFS</original>
    <variation>DLITCLEQGKEPWNMKRHEMVVAKHSAVAFTYDLSGLNILSFQSILPFVSALYVMGNRNQCLQKHLEARNKDLCVLVLPKTFG</variation>
    <location>
        <begin position="13"/>
        <end position="95"/>
    </location>
</feature>
<feature type="splice variant" id="VSP_047447" description="In isoform 3." evidence="4">
    <location>
        <begin position="96"/>
        <end position="262"/>
    </location>
</feature>
<feature type="sequence variant" id="VAR_057398" description="In dbSNP:rs10949946." evidence="2 3">
    <original>G</original>
    <variation>E</variation>
    <location>
        <position position="62"/>
    </location>
</feature>
<feature type="sequence conflict" description="In Ref. 3; AAC50263." evidence="5" ref="3">
    <original>LW</original>
    <variation>KG</variation>
    <location>
        <begin position="22"/>
        <end position="23"/>
    </location>
</feature>
<feature type="sequence conflict" description="In Ref. 1; AK055644/BAG60499 and 3; AAC50263." evidence="5" ref="1 3">
    <original>F</original>
    <variation>Y</variation>
    <location>
        <position position="67"/>
    </location>
</feature>
<feature type="sequence conflict" description="In Ref. 1; BAG60499." evidence="5" ref="1">
    <original>M</original>
    <variation>V</variation>
    <location sequence="P52744-2">
        <position position="33"/>
    </location>
</feature>
<reference key="1">
    <citation type="journal article" date="2004" name="Nat. Genet.">
        <title>Complete sequencing and characterization of 21,243 full-length human cDNAs.</title>
        <authorList>
            <person name="Ota T."/>
            <person name="Suzuki Y."/>
            <person name="Nishikawa T."/>
            <person name="Otsuki T."/>
            <person name="Sugiyama T."/>
            <person name="Irie R."/>
            <person name="Wakamatsu A."/>
            <person name="Hayashi K."/>
            <person name="Sato H."/>
            <person name="Nagai K."/>
            <person name="Kimura K."/>
            <person name="Makita H."/>
            <person name="Sekine M."/>
            <person name="Obayashi M."/>
            <person name="Nishi T."/>
            <person name="Shibahara T."/>
            <person name="Tanaka T."/>
            <person name="Ishii S."/>
            <person name="Yamamoto J."/>
            <person name="Saito K."/>
            <person name="Kawai Y."/>
            <person name="Isono Y."/>
            <person name="Nakamura Y."/>
            <person name="Nagahari K."/>
            <person name="Murakami K."/>
            <person name="Yasuda T."/>
            <person name="Iwayanagi T."/>
            <person name="Wagatsuma M."/>
            <person name="Shiratori A."/>
            <person name="Sudo H."/>
            <person name="Hosoiri T."/>
            <person name="Kaku Y."/>
            <person name="Kodaira H."/>
            <person name="Kondo H."/>
            <person name="Sugawara M."/>
            <person name="Takahashi M."/>
            <person name="Kanda K."/>
            <person name="Yokoi T."/>
            <person name="Furuya T."/>
            <person name="Kikkawa E."/>
            <person name="Omura Y."/>
            <person name="Abe K."/>
            <person name="Kamihara K."/>
            <person name="Katsuta N."/>
            <person name="Sato K."/>
            <person name="Tanikawa M."/>
            <person name="Yamazaki M."/>
            <person name="Ninomiya K."/>
            <person name="Ishibashi T."/>
            <person name="Yamashita H."/>
            <person name="Murakawa K."/>
            <person name="Fujimori K."/>
            <person name="Tanai H."/>
            <person name="Kimata M."/>
            <person name="Watanabe M."/>
            <person name="Hiraoka S."/>
            <person name="Chiba Y."/>
            <person name="Ishida S."/>
            <person name="Ono Y."/>
            <person name="Takiguchi S."/>
            <person name="Watanabe S."/>
            <person name="Yosida M."/>
            <person name="Hotuta T."/>
            <person name="Kusano J."/>
            <person name="Kanehori K."/>
            <person name="Takahashi-Fujii A."/>
            <person name="Hara H."/>
            <person name="Tanase T.-O."/>
            <person name="Nomura Y."/>
            <person name="Togiya S."/>
            <person name="Komai F."/>
            <person name="Hara R."/>
            <person name="Takeuchi K."/>
            <person name="Arita M."/>
            <person name="Imose N."/>
            <person name="Musashino K."/>
            <person name="Yuuki H."/>
            <person name="Oshima A."/>
            <person name="Sasaki N."/>
            <person name="Aotsuka S."/>
            <person name="Yoshikawa Y."/>
            <person name="Matsunawa H."/>
            <person name="Ichihara T."/>
            <person name="Shiohata N."/>
            <person name="Sano S."/>
            <person name="Moriya S."/>
            <person name="Momiyama H."/>
            <person name="Satoh N."/>
            <person name="Takami S."/>
            <person name="Terashima Y."/>
            <person name="Suzuki O."/>
            <person name="Nakagawa S."/>
            <person name="Senoh A."/>
            <person name="Mizoguchi H."/>
            <person name="Goto Y."/>
            <person name="Shimizu F."/>
            <person name="Wakebe H."/>
            <person name="Hishigaki H."/>
            <person name="Watanabe T."/>
            <person name="Sugiyama A."/>
            <person name="Takemoto M."/>
            <person name="Kawakami B."/>
            <person name="Yamazaki M."/>
            <person name="Watanabe K."/>
            <person name="Kumagai A."/>
            <person name="Itakura S."/>
            <person name="Fukuzumi Y."/>
            <person name="Fujimori Y."/>
            <person name="Komiyama M."/>
            <person name="Tashiro H."/>
            <person name="Tanigami A."/>
            <person name="Fujiwara T."/>
            <person name="Ono T."/>
            <person name="Yamada K."/>
            <person name="Fujii Y."/>
            <person name="Ozaki K."/>
            <person name="Hirao M."/>
            <person name="Ohmori Y."/>
            <person name="Kawabata A."/>
            <person name="Hikiji T."/>
            <person name="Kobatake N."/>
            <person name="Inagaki H."/>
            <person name="Ikema Y."/>
            <person name="Okamoto S."/>
            <person name="Okitani R."/>
            <person name="Kawakami T."/>
            <person name="Noguchi S."/>
            <person name="Itoh T."/>
            <person name="Shigeta K."/>
            <person name="Senba T."/>
            <person name="Matsumura K."/>
            <person name="Nakajima Y."/>
            <person name="Mizuno T."/>
            <person name="Morinaga M."/>
            <person name="Sasaki M."/>
            <person name="Togashi T."/>
            <person name="Oyama M."/>
            <person name="Hata H."/>
            <person name="Watanabe M."/>
            <person name="Komatsu T."/>
            <person name="Mizushima-Sugano J."/>
            <person name="Satoh T."/>
            <person name="Shirai Y."/>
            <person name="Takahashi Y."/>
            <person name="Nakagawa K."/>
            <person name="Okumura K."/>
            <person name="Nagase T."/>
            <person name="Nomura N."/>
            <person name="Kikuchi H."/>
            <person name="Masuho Y."/>
            <person name="Yamashita R."/>
            <person name="Nakai K."/>
            <person name="Yada T."/>
            <person name="Nakamura Y."/>
            <person name="Ohara O."/>
            <person name="Isogai T."/>
            <person name="Sugano S."/>
        </authorList>
    </citation>
    <scope>NUCLEOTIDE SEQUENCE [LARGE SCALE MRNA] (ISOFORMS 1; 2 AND 3)</scope>
    <scope>VARIANT GLU-62</scope>
    <source>
        <tissue>Amygdala</tissue>
    </source>
</reference>
<reference key="2">
    <citation type="journal article" date="2003" name="Nature">
        <title>The DNA sequence of human chromosome 7.</title>
        <authorList>
            <person name="Hillier L.W."/>
            <person name="Fulton R.S."/>
            <person name="Fulton L.A."/>
            <person name="Graves T.A."/>
            <person name="Pepin K.H."/>
            <person name="Wagner-McPherson C."/>
            <person name="Layman D."/>
            <person name="Maas J."/>
            <person name="Jaeger S."/>
            <person name="Walker R."/>
            <person name="Wylie K."/>
            <person name="Sekhon M."/>
            <person name="Becker M.C."/>
            <person name="O'Laughlin M.D."/>
            <person name="Schaller M.E."/>
            <person name="Fewell G.A."/>
            <person name="Delehaunty K.D."/>
            <person name="Miner T.L."/>
            <person name="Nash W.E."/>
            <person name="Cordes M."/>
            <person name="Du H."/>
            <person name="Sun H."/>
            <person name="Edwards J."/>
            <person name="Bradshaw-Cordum H."/>
            <person name="Ali J."/>
            <person name="Andrews S."/>
            <person name="Isak A."/>
            <person name="Vanbrunt A."/>
            <person name="Nguyen C."/>
            <person name="Du F."/>
            <person name="Lamar B."/>
            <person name="Courtney L."/>
            <person name="Kalicki J."/>
            <person name="Ozersky P."/>
            <person name="Bielicki L."/>
            <person name="Scott K."/>
            <person name="Holmes A."/>
            <person name="Harkins R."/>
            <person name="Harris A."/>
            <person name="Strong C.M."/>
            <person name="Hou S."/>
            <person name="Tomlinson C."/>
            <person name="Dauphin-Kohlberg S."/>
            <person name="Kozlowicz-Reilly A."/>
            <person name="Leonard S."/>
            <person name="Rohlfing T."/>
            <person name="Rock S.M."/>
            <person name="Tin-Wollam A.-M."/>
            <person name="Abbott A."/>
            <person name="Minx P."/>
            <person name="Maupin R."/>
            <person name="Strowmatt C."/>
            <person name="Latreille P."/>
            <person name="Miller N."/>
            <person name="Johnson D."/>
            <person name="Murray J."/>
            <person name="Woessner J.P."/>
            <person name="Wendl M.C."/>
            <person name="Yang S.-P."/>
            <person name="Schultz B.R."/>
            <person name="Wallis J.W."/>
            <person name="Spieth J."/>
            <person name="Bieri T.A."/>
            <person name="Nelson J.O."/>
            <person name="Berkowicz N."/>
            <person name="Wohldmann P.E."/>
            <person name="Cook L.L."/>
            <person name="Hickenbotham M.T."/>
            <person name="Eldred J."/>
            <person name="Williams D."/>
            <person name="Bedell J.A."/>
            <person name="Mardis E.R."/>
            <person name="Clifton S.W."/>
            <person name="Chissoe S.L."/>
            <person name="Marra M.A."/>
            <person name="Raymond C."/>
            <person name="Haugen E."/>
            <person name="Gillett W."/>
            <person name="Zhou Y."/>
            <person name="James R."/>
            <person name="Phelps K."/>
            <person name="Iadanoto S."/>
            <person name="Bubb K."/>
            <person name="Simms E."/>
            <person name="Levy R."/>
            <person name="Clendenning J."/>
            <person name="Kaul R."/>
            <person name="Kent W.J."/>
            <person name="Furey T.S."/>
            <person name="Baertsch R.A."/>
            <person name="Brent M.R."/>
            <person name="Keibler E."/>
            <person name="Flicek P."/>
            <person name="Bork P."/>
            <person name="Suyama M."/>
            <person name="Bailey J.A."/>
            <person name="Portnoy M.E."/>
            <person name="Torrents D."/>
            <person name="Chinwalla A.T."/>
            <person name="Gish W.R."/>
            <person name="Eddy S.R."/>
            <person name="McPherson J.D."/>
            <person name="Olson M.V."/>
            <person name="Eichler E.E."/>
            <person name="Green E.D."/>
            <person name="Waterston R.H."/>
            <person name="Wilson R.K."/>
        </authorList>
    </citation>
    <scope>NUCLEOTIDE SEQUENCE [LARGE SCALE GENOMIC DNA]</scope>
</reference>
<reference key="3">
    <citation type="journal article" date="1995" name="Genomics">
        <title>Isolation and fine mapping of 16 novel human zinc finger-encoding cDNAs identify putative candidate genes for developmental and malignant disorders.</title>
        <authorList>
            <person name="Tommerup N."/>
            <person name="Vissing H."/>
        </authorList>
    </citation>
    <scope>NUCLEOTIDE SEQUENCE [MRNA] OF 22-260 (ISOFORM 1)</scope>
    <scope>VARIANT GLU-62</scope>
    <source>
        <tissue>Insulinoma</tissue>
    </source>
</reference>
<keyword id="KW-0025">Alternative splicing</keyword>
<keyword id="KW-0238">DNA-binding</keyword>
<keyword id="KW-0479">Metal-binding</keyword>
<keyword id="KW-0539">Nucleus</keyword>
<keyword id="KW-1185">Reference proteome</keyword>
<keyword id="KW-0677">Repeat</keyword>
<keyword id="KW-0678">Repressor</keyword>
<keyword id="KW-0804">Transcription</keyword>
<keyword id="KW-0805">Transcription regulation</keyword>
<keyword id="KW-0862">Zinc</keyword>
<keyword id="KW-0863">Zinc-finger</keyword>